<keyword id="KW-0004">4Fe-4S</keyword>
<keyword id="KW-0150">Chloroplast</keyword>
<keyword id="KW-0249">Electron transport</keyword>
<keyword id="KW-0408">Iron</keyword>
<keyword id="KW-0411">Iron-sulfur</keyword>
<keyword id="KW-0472">Membrane</keyword>
<keyword id="KW-0479">Metal-binding</keyword>
<keyword id="KW-0560">Oxidoreductase</keyword>
<keyword id="KW-0602">Photosynthesis</keyword>
<keyword id="KW-0603">Photosystem I</keyword>
<keyword id="KW-0934">Plastid</keyword>
<keyword id="KW-0677">Repeat</keyword>
<keyword id="KW-0793">Thylakoid</keyword>
<keyword id="KW-0813">Transport</keyword>
<gene>
    <name evidence="2" type="primary">psaC</name>
</gene>
<dbReference type="EC" id="1.97.1.12" evidence="2"/>
<dbReference type="EMBL" id="AY178864">
    <property type="protein sequence ID" value="AAP29442.1"/>
    <property type="molecule type" value="Genomic_DNA"/>
</dbReference>
<dbReference type="RefSeq" id="NP_848111.1">
    <property type="nucleotide sequence ID" value="NC_004766.1"/>
</dbReference>
<dbReference type="SMR" id="Q85FH4"/>
<dbReference type="GeneID" id="807445"/>
<dbReference type="GO" id="GO:0009535">
    <property type="term" value="C:chloroplast thylakoid membrane"/>
    <property type="evidence" value="ECO:0007669"/>
    <property type="project" value="UniProtKB-SubCell"/>
</dbReference>
<dbReference type="GO" id="GO:0009522">
    <property type="term" value="C:photosystem I"/>
    <property type="evidence" value="ECO:0007669"/>
    <property type="project" value="UniProtKB-KW"/>
</dbReference>
<dbReference type="GO" id="GO:0051539">
    <property type="term" value="F:4 iron, 4 sulfur cluster binding"/>
    <property type="evidence" value="ECO:0007669"/>
    <property type="project" value="UniProtKB-KW"/>
</dbReference>
<dbReference type="GO" id="GO:0009055">
    <property type="term" value="F:electron transfer activity"/>
    <property type="evidence" value="ECO:0007669"/>
    <property type="project" value="UniProtKB-UniRule"/>
</dbReference>
<dbReference type="GO" id="GO:0046872">
    <property type="term" value="F:metal ion binding"/>
    <property type="evidence" value="ECO:0007669"/>
    <property type="project" value="UniProtKB-KW"/>
</dbReference>
<dbReference type="GO" id="GO:0016491">
    <property type="term" value="F:oxidoreductase activity"/>
    <property type="evidence" value="ECO:0007669"/>
    <property type="project" value="UniProtKB-KW"/>
</dbReference>
<dbReference type="GO" id="GO:0009773">
    <property type="term" value="P:photosynthetic electron transport in photosystem I"/>
    <property type="evidence" value="ECO:0007669"/>
    <property type="project" value="InterPro"/>
</dbReference>
<dbReference type="FunFam" id="3.30.70.20:FF:000001">
    <property type="entry name" value="Photosystem I iron-sulfur center"/>
    <property type="match status" value="1"/>
</dbReference>
<dbReference type="Gene3D" id="3.30.70.20">
    <property type="match status" value="1"/>
</dbReference>
<dbReference type="HAMAP" id="MF_01303">
    <property type="entry name" value="PSI_PsaC"/>
    <property type="match status" value="1"/>
</dbReference>
<dbReference type="InterPro" id="IPR017896">
    <property type="entry name" value="4Fe4S_Fe-S-bd"/>
</dbReference>
<dbReference type="InterPro" id="IPR017900">
    <property type="entry name" value="4Fe4S_Fe_S_CS"/>
</dbReference>
<dbReference type="InterPro" id="IPR050157">
    <property type="entry name" value="PSI_iron-sulfur_center"/>
</dbReference>
<dbReference type="InterPro" id="IPR017491">
    <property type="entry name" value="PSI_PsaC"/>
</dbReference>
<dbReference type="NCBIfam" id="TIGR03048">
    <property type="entry name" value="PS_I_psaC"/>
    <property type="match status" value="1"/>
</dbReference>
<dbReference type="PANTHER" id="PTHR24960:SF79">
    <property type="entry name" value="PHOTOSYSTEM I IRON-SULFUR CENTER"/>
    <property type="match status" value="1"/>
</dbReference>
<dbReference type="PANTHER" id="PTHR24960">
    <property type="entry name" value="PHOTOSYSTEM I IRON-SULFUR CENTER-RELATED"/>
    <property type="match status" value="1"/>
</dbReference>
<dbReference type="Pfam" id="PF14697">
    <property type="entry name" value="Fer4_21"/>
    <property type="match status" value="1"/>
</dbReference>
<dbReference type="SUPFAM" id="SSF54862">
    <property type="entry name" value="4Fe-4S ferredoxins"/>
    <property type="match status" value="1"/>
</dbReference>
<dbReference type="PROSITE" id="PS00198">
    <property type="entry name" value="4FE4S_FER_1"/>
    <property type="match status" value="2"/>
</dbReference>
<dbReference type="PROSITE" id="PS51379">
    <property type="entry name" value="4FE4S_FER_2"/>
    <property type="match status" value="2"/>
</dbReference>
<accession>Q85FH4</accession>
<sequence>MAHSVKIYDTCIGCTQCVRACPTDVLEMIPWDGCKANQIASAPRTEDCVGCKRCESACPTDFLSVRVYLGAETTRSMGLAY</sequence>
<evidence type="ECO:0000250" key="1"/>
<evidence type="ECO:0000255" key="2">
    <source>
        <dbReference type="HAMAP-Rule" id="MF_01303"/>
    </source>
</evidence>
<comment type="function">
    <text evidence="2">Apoprotein for the two 4Fe-4S centers FA and FB of photosystem I (PSI); essential for photochemical activity. FB is the terminal electron acceptor of PSI, donating electrons to ferredoxin. The C-terminus interacts with PsaA/B/D and helps assemble the protein into the PSI complex. Required for binding of PsaD and PsaE to PSI. PSI is a plastocyanin-ferredoxin oxidoreductase, converting photonic excitation into a charge separation, which transfers an electron from the donor P700 chlorophyll pair to the spectroscopically characterized acceptors A0, A1, FX, FA and FB in turn.</text>
</comment>
<comment type="catalytic activity">
    <reaction evidence="2">
        <text>reduced [plastocyanin] + hnu + oxidized [2Fe-2S]-[ferredoxin] = oxidized [plastocyanin] + reduced [2Fe-2S]-[ferredoxin]</text>
        <dbReference type="Rhea" id="RHEA:30407"/>
        <dbReference type="Rhea" id="RHEA-COMP:10000"/>
        <dbReference type="Rhea" id="RHEA-COMP:10001"/>
        <dbReference type="Rhea" id="RHEA-COMP:10039"/>
        <dbReference type="Rhea" id="RHEA-COMP:10040"/>
        <dbReference type="ChEBI" id="CHEBI:29036"/>
        <dbReference type="ChEBI" id="CHEBI:30212"/>
        <dbReference type="ChEBI" id="CHEBI:33737"/>
        <dbReference type="ChEBI" id="CHEBI:33738"/>
        <dbReference type="ChEBI" id="CHEBI:49552"/>
        <dbReference type="EC" id="1.97.1.12"/>
    </reaction>
</comment>
<comment type="cofactor">
    <cofactor evidence="2">
        <name>[4Fe-4S] cluster</name>
        <dbReference type="ChEBI" id="CHEBI:49883"/>
    </cofactor>
    <text evidence="2">Binds 2 [4Fe-4S] clusters. Cluster 2 is most probably the spectroscopically characterized electron acceptor FA and cluster 1 is most probably FB.</text>
</comment>
<comment type="subunit">
    <text evidence="2">The eukaryotic PSI reaction center is composed of at least 11 subunits.</text>
</comment>
<comment type="subcellular location">
    <subcellularLocation>
        <location evidence="2">Plastid</location>
        <location evidence="2">Chloroplast thylakoid membrane</location>
        <topology evidence="2">Peripheral membrane protein</topology>
        <orientation evidence="2">Stromal side</orientation>
    </subcellularLocation>
</comment>
<geneLocation type="chloroplast"/>
<reference key="1">
    <citation type="journal article" date="2003" name="DNA Res.">
        <title>Complete nucleotide sequence of the chloroplast genome from a leptosporangiate fern, Adiantum capillus-veneris L.</title>
        <authorList>
            <person name="Wolf P.G."/>
            <person name="Rowe C.A."/>
            <person name="Sinclair R.B."/>
            <person name="Hasebe M."/>
        </authorList>
    </citation>
    <scope>NUCLEOTIDE SEQUENCE [LARGE SCALE GENOMIC DNA]</scope>
</reference>
<reference key="2">
    <citation type="journal article" date="2004" name="Gene">
        <title>High levels of RNA editing in a vascular plant chloroplast genome: analysis of transcripts from the fern Adiantum capillus-veneris.</title>
        <authorList>
            <person name="Wolf P.G."/>
            <person name="Rowe C.A."/>
            <person name="Hasebe M."/>
        </authorList>
    </citation>
    <scope>NUCLEOTIDE SEQUENCE [GENOMIC DNA]</scope>
    <scope>ABSENCE OF RNA EDITING</scope>
    <source>
        <tissue>Frond</tissue>
    </source>
</reference>
<proteinExistence type="evidence at transcript level"/>
<name>PSAC_ADICA</name>
<feature type="initiator methionine" description="Removed" evidence="1">
    <location>
        <position position="1"/>
    </location>
</feature>
<feature type="chain" id="PRO_0000061966" description="Photosystem I iron-sulfur center">
    <location>
        <begin position="2"/>
        <end position="81"/>
    </location>
</feature>
<feature type="domain" description="4Fe-4S ferredoxin-type 1" evidence="2">
    <location>
        <begin position="2"/>
        <end position="31"/>
    </location>
</feature>
<feature type="domain" description="4Fe-4S ferredoxin-type 2" evidence="2">
    <location>
        <begin position="39"/>
        <end position="68"/>
    </location>
</feature>
<feature type="binding site" evidence="2">
    <location>
        <position position="11"/>
    </location>
    <ligand>
        <name>[4Fe-4S] cluster</name>
        <dbReference type="ChEBI" id="CHEBI:49883"/>
        <label>1</label>
    </ligand>
</feature>
<feature type="binding site" evidence="2">
    <location>
        <position position="14"/>
    </location>
    <ligand>
        <name>[4Fe-4S] cluster</name>
        <dbReference type="ChEBI" id="CHEBI:49883"/>
        <label>1</label>
    </ligand>
</feature>
<feature type="binding site" evidence="2">
    <location>
        <position position="17"/>
    </location>
    <ligand>
        <name>[4Fe-4S] cluster</name>
        <dbReference type="ChEBI" id="CHEBI:49883"/>
        <label>1</label>
    </ligand>
</feature>
<feature type="binding site" evidence="2">
    <location>
        <position position="21"/>
    </location>
    <ligand>
        <name>[4Fe-4S] cluster</name>
        <dbReference type="ChEBI" id="CHEBI:49883"/>
        <label>2</label>
    </ligand>
</feature>
<feature type="binding site" evidence="2">
    <location>
        <position position="48"/>
    </location>
    <ligand>
        <name>[4Fe-4S] cluster</name>
        <dbReference type="ChEBI" id="CHEBI:49883"/>
        <label>2</label>
    </ligand>
</feature>
<feature type="binding site" evidence="2">
    <location>
        <position position="51"/>
    </location>
    <ligand>
        <name>[4Fe-4S] cluster</name>
        <dbReference type="ChEBI" id="CHEBI:49883"/>
        <label>2</label>
    </ligand>
</feature>
<feature type="binding site" evidence="2">
    <location>
        <position position="54"/>
    </location>
    <ligand>
        <name>[4Fe-4S] cluster</name>
        <dbReference type="ChEBI" id="CHEBI:49883"/>
        <label>2</label>
    </ligand>
</feature>
<feature type="binding site" evidence="2">
    <location>
        <position position="58"/>
    </location>
    <ligand>
        <name>[4Fe-4S] cluster</name>
        <dbReference type="ChEBI" id="CHEBI:49883"/>
        <label>1</label>
    </ligand>
</feature>
<organism>
    <name type="scientific">Adiantum capillus-veneris</name>
    <name type="common">Maidenhair fern</name>
    <dbReference type="NCBI Taxonomy" id="13818"/>
    <lineage>
        <taxon>Eukaryota</taxon>
        <taxon>Viridiplantae</taxon>
        <taxon>Streptophyta</taxon>
        <taxon>Embryophyta</taxon>
        <taxon>Tracheophyta</taxon>
        <taxon>Polypodiopsida</taxon>
        <taxon>Polypodiidae</taxon>
        <taxon>Polypodiales</taxon>
        <taxon>Pteridineae</taxon>
        <taxon>Pteridaceae</taxon>
        <taxon>Vittarioideae</taxon>
        <taxon>Adiantum</taxon>
    </lineage>
</organism>
<protein>
    <recommendedName>
        <fullName evidence="2">Photosystem I iron-sulfur center</fullName>
        <ecNumber evidence="2">1.97.1.12</ecNumber>
    </recommendedName>
    <alternativeName>
        <fullName evidence="2">9 kDa polypeptide</fullName>
    </alternativeName>
    <alternativeName>
        <fullName evidence="2">PSI-C</fullName>
    </alternativeName>
    <alternativeName>
        <fullName evidence="2">Photosystem I subunit VII</fullName>
    </alternativeName>
    <alternativeName>
        <fullName evidence="2">PsaC</fullName>
    </alternativeName>
</protein>